<reference key="1">
    <citation type="journal article" date="1987" name="DNA">
        <title>Debrisoquine 4-hydroxylase: characterization of a new P450 gene subfamily, regulation, chromosomal mapping, and molecular analysis of the DA rat polymorphism.</title>
        <authorList>
            <person name="Gonzalez F.J."/>
            <person name="Matsunaga T."/>
            <person name="Nagata K."/>
            <person name="Meyer U.A."/>
            <person name="Nebert D.W."/>
            <person name="Pastewka J."/>
            <person name="Kozak C.A."/>
            <person name="Gillette J."/>
            <person name="Gelboin H.V."/>
            <person name="Hardwick J.P."/>
        </authorList>
    </citation>
    <scope>NUCLEOTIDE SEQUENCE [MRNA]</scope>
</reference>
<reference key="2">
    <citation type="journal article" date="1989" name="Biochemistry">
        <title>The CYP2D gene subfamily: analysis of the molecular basis of the debrisoquine 4-hydroxylase deficiency in DA rats.</title>
        <authorList>
            <person name="Matsunaga E."/>
            <person name="Zanger U.M."/>
            <person name="Hardwick J.P."/>
            <person name="Gelboin H.V."/>
            <person name="Meyer U.A."/>
            <person name="Gonzalez F.J."/>
        </authorList>
    </citation>
    <scope>NUCLEOTIDE SEQUENCE [MRNA]</scope>
</reference>
<reference key="3">
    <citation type="journal article" date="1988" name="Biochem. Biophys. Res. Commun.">
        <title>Four species of cDNAs for cytochrome P450 isozymes immunorelated to P450C-M/F encode for members of P450IID subfamily, increasing the number of members within the subfamily.</title>
        <authorList>
            <person name="Ishida N."/>
            <person name="Tawaragi Y."/>
            <person name="Inuzuka C."/>
            <person name="Sugita O."/>
            <person name="Kubota I."/>
            <person name="Nakazato H."/>
            <person name="Noguchi T."/>
            <person name="Sassa S."/>
        </authorList>
    </citation>
    <scope>NUCLEOTIDE SEQUENCE [MRNA]</scope>
</reference>
<reference key="4">
    <citation type="journal article" date="1990" name="J. Mol. Evol.">
        <title>The rat P450 IID subfamily: complete sequences of four closely linked genes and evidence that gene conversions maintained sequence homogeneity at the heme-binding region of the cytochrome P450 active site.</title>
        <authorList>
            <person name="Matsunaga E."/>
            <person name="Umeno M."/>
            <person name="Gonzalez F.J."/>
        </authorList>
    </citation>
    <scope>NUCLEOTIDE SEQUENCE [GENOMIC DNA]</scope>
    <source>
        <strain>Sprague-Dawley</strain>
        <tissue>Liver</tissue>
    </source>
</reference>
<reference key="5">
    <citation type="journal article" date="1997" name="Arch. Biochem. Biophys.">
        <title>Expression of four rat CYP2D isoforms in Saccharomyces cerevisiae and their catalytic specificity.</title>
        <authorList>
            <person name="Wan J."/>
            <person name="Imaoka S."/>
            <person name="Chow T."/>
            <person name="Hiroi T."/>
            <person name="Yabusaki Y."/>
            <person name="Funae Y."/>
        </authorList>
    </citation>
    <scope>NUCLEOTIDE SEQUENCE [MRNA]</scope>
    <source>
        <strain>Sprague-Dawley</strain>
        <tissue>Liver</tissue>
    </source>
</reference>
<reference key="6">
    <citation type="journal article" date="2004" name="Genome Res.">
        <title>The status, quality, and expansion of the NIH full-length cDNA project: the Mammalian Gene Collection (MGC).</title>
        <authorList>
            <consortium name="The MGC Project Team"/>
        </authorList>
    </citation>
    <scope>NUCLEOTIDE SEQUENCE [LARGE SCALE MRNA]</scope>
    <source>
        <tissue>Kidney</tissue>
    </source>
</reference>
<reference key="7">
    <citation type="journal article" date="2012" name="Nat. Commun.">
        <title>Quantitative maps of protein phosphorylation sites across 14 different rat organs and tissues.</title>
        <authorList>
            <person name="Lundby A."/>
            <person name="Secher A."/>
            <person name="Lage K."/>
            <person name="Nordsborg N.B."/>
            <person name="Dmytriyev A."/>
            <person name="Lundby C."/>
            <person name="Olsen J.V."/>
        </authorList>
    </citation>
    <scope>PHOSPHORYLATION [LARGE SCALE ANALYSIS] AT SER-249</scope>
    <scope>IDENTIFICATION BY MASS SPECTROMETRY [LARGE SCALE ANALYSIS]</scope>
</reference>
<dbReference type="EC" id="1.14.14.1"/>
<dbReference type="EMBL" id="M16655">
    <property type="protein sequence ID" value="AAA41055.1"/>
    <property type="molecule type" value="mRNA"/>
</dbReference>
<dbReference type="EMBL" id="M22330">
    <property type="protein sequence ID" value="AAA41049.1"/>
    <property type="molecule type" value="mRNA"/>
</dbReference>
<dbReference type="EMBL" id="X52027">
    <property type="protein sequence ID" value="CAA36269.1"/>
    <property type="molecule type" value="Genomic_DNA"/>
</dbReference>
<dbReference type="EMBL" id="AB008423">
    <property type="protein sequence ID" value="BAA23123.1"/>
    <property type="molecule type" value="mRNA"/>
</dbReference>
<dbReference type="EMBL" id="BC078897">
    <property type="protein sequence ID" value="AAH78897.1"/>
    <property type="molecule type" value="mRNA"/>
</dbReference>
<dbReference type="PIR" id="B26822">
    <property type="entry name" value="B26822"/>
</dbReference>
<dbReference type="RefSeq" id="NP_036862.1">
    <property type="nucleotide sequence ID" value="NM_012730.1"/>
</dbReference>
<dbReference type="SMR" id="P10634"/>
<dbReference type="FunCoup" id="P10634">
    <property type="interactions" value="143"/>
</dbReference>
<dbReference type="IntAct" id="P10634">
    <property type="interactions" value="8"/>
</dbReference>
<dbReference type="STRING" id="10116.ENSRNOP00000012413"/>
<dbReference type="BindingDB" id="P10634"/>
<dbReference type="ChEMBL" id="CHEMBL2483"/>
<dbReference type="iPTMnet" id="P10634"/>
<dbReference type="PhosphoSitePlus" id="P10634"/>
<dbReference type="PaxDb" id="10116-ENSRNOP00000012413"/>
<dbReference type="Ensembl" id="ENSRNOT00000012413.5">
    <property type="protein sequence ID" value="ENSRNOP00000012413.3"/>
    <property type="gene ID" value="ENSRNOG00000008988.5"/>
</dbReference>
<dbReference type="GeneID" id="25053"/>
<dbReference type="KEGG" id="rno:25053"/>
<dbReference type="UCSC" id="RGD:2471">
    <property type="organism name" value="rat"/>
</dbReference>
<dbReference type="AGR" id="RGD:2471"/>
<dbReference type="CTD" id="25053"/>
<dbReference type="RGD" id="2471">
    <property type="gene designation" value="Cyp2d2"/>
</dbReference>
<dbReference type="eggNOG" id="KOG0156">
    <property type="taxonomic scope" value="Eukaryota"/>
</dbReference>
<dbReference type="GeneTree" id="ENSGT00940000153331"/>
<dbReference type="HOGENOM" id="CLU_001570_22_3_1"/>
<dbReference type="InParanoid" id="P10634"/>
<dbReference type="OMA" id="HCQRYAG"/>
<dbReference type="OrthoDB" id="3934656at2759"/>
<dbReference type="PhylomeDB" id="P10634"/>
<dbReference type="TreeFam" id="TF352043"/>
<dbReference type="SABIO-RK" id="P10634"/>
<dbReference type="PRO" id="PR:P10634"/>
<dbReference type="Proteomes" id="UP000002494">
    <property type="component" value="Chromosome 7"/>
</dbReference>
<dbReference type="Bgee" id="ENSRNOG00000008988">
    <property type="expression patterns" value="Expressed in liver and 15 other cell types or tissues"/>
</dbReference>
<dbReference type="GO" id="GO:0005737">
    <property type="term" value="C:cytoplasm"/>
    <property type="evidence" value="ECO:0000318"/>
    <property type="project" value="GO_Central"/>
</dbReference>
<dbReference type="GO" id="GO:0005789">
    <property type="term" value="C:endoplasmic reticulum membrane"/>
    <property type="evidence" value="ECO:0007669"/>
    <property type="project" value="UniProtKB-SubCell"/>
</dbReference>
<dbReference type="GO" id="GO:0043231">
    <property type="term" value="C:intracellular membrane-bounded organelle"/>
    <property type="evidence" value="ECO:0000318"/>
    <property type="project" value="GO_Central"/>
</dbReference>
<dbReference type="GO" id="GO:0020037">
    <property type="term" value="F:heme binding"/>
    <property type="evidence" value="ECO:0000318"/>
    <property type="project" value="GO_Central"/>
</dbReference>
<dbReference type="GO" id="GO:0005506">
    <property type="term" value="F:iron ion binding"/>
    <property type="evidence" value="ECO:0007669"/>
    <property type="project" value="InterPro"/>
</dbReference>
<dbReference type="GO" id="GO:0004497">
    <property type="term" value="F:monooxygenase activity"/>
    <property type="evidence" value="ECO:0000314"/>
    <property type="project" value="RGD"/>
</dbReference>
<dbReference type="GO" id="GO:0016712">
    <property type="term" value="F:oxidoreductase activity, acting on paired donors, with incorporation or reduction of molecular oxygen, reduced flavin or flavoprotein as one donor, and incorporation of one atom of oxygen"/>
    <property type="evidence" value="ECO:0000318"/>
    <property type="project" value="GO_Central"/>
</dbReference>
<dbReference type="GO" id="GO:0019369">
    <property type="term" value="P:arachidonate metabolic process"/>
    <property type="evidence" value="ECO:0000318"/>
    <property type="project" value="GO_Central"/>
</dbReference>
<dbReference type="GO" id="GO:0007565">
    <property type="term" value="P:female pregnancy"/>
    <property type="evidence" value="ECO:0000270"/>
    <property type="project" value="RGD"/>
</dbReference>
<dbReference type="GO" id="GO:0033595">
    <property type="term" value="P:response to genistein"/>
    <property type="evidence" value="ECO:0000270"/>
    <property type="project" value="RGD"/>
</dbReference>
<dbReference type="GO" id="GO:0009410">
    <property type="term" value="P:response to xenobiotic stimulus"/>
    <property type="evidence" value="ECO:0000314"/>
    <property type="project" value="RGD"/>
</dbReference>
<dbReference type="GO" id="GO:0006805">
    <property type="term" value="P:xenobiotic metabolic process"/>
    <property type="evidence" value="ECO:0000318"/>
    <property type="project" value="GO_Central"/>
</dbReference>
<dbReference type="CDD" id="cd20663">
    <property type="entry name" value="CYP2D"/>
    <property type="match status" value="1"/>
</dbReference>
<dbReference type="FunFam" id="1.10.630.10:FF:000004">
    <property type="entry name" value="cytochrome P450 2D15 isoform X1"/>
    <property type="match status" value="1"/>
</dbReference>
<dbReference type="Gene3D" id="1.10.630.10">
    <property type="entry name" value="Cytochrome P450"/>
    <property type="match status" value="1"/>
</dbReference>
<dbReference type="InterPro" id="IPR001128">
    <property type="entry name" value="Cyt_P450"/>
</dbReference>
<dbReference type="InterPro" id="IPR017972">
    <property type="entry name" value="Cyt_P450_CS"/>
</dbReference>
<dbReference type="InterPro" id="IPR002401">
    <property type="entry name" value="Cyt_P450_E_grp-I"/>
</dbReference>
<dbReference type="InterPro" id="IPR008069">
    <property type="entry name" value="Cyt_P450_E_grp-I_CYP2D-like"/>
</dbReference>
<dbReference type="InterPro" id="IPR036396">
    <property type="entry name" value="Cyt_P450_sf"/>
</dbReference>
<dbReference type="InterPro" id="IPR050182">
    <property type="entry name" value="Cytochrome_P450_fam2"/>
</dbReference>
<dbReference type="PANTHER" id="PTHR24300:SF109">
    <property type="entry name" value="CYTOCHROME P450 2D26"/>
    <property type="match status" value="1"/>
</dbReference>
<dbReference type="PANTHER" id="PTHR24300">
    <property type="entry name" value="CYTOCHROME P450 508A4-RELATED"/>
    <property type="match status" value="1"/>
</dbReference>
<dbReference type="Pfam" id="PF00067">
    <property type="entry name" value="p450"/>
    <property type="match status" value="1"/>
</dbReference>
<dbReference type="PRINTS" id="PR00463">
    <property type="entry name" value="EP450I"/>
</dbReference>
<dbReference type="PRINTS" id="PR01686">
    <property type="entry name" value="EP450ICYP2D"/>
</dbReference>
<dbReference type="PRINTS" id="PR00385">
    <property type="entry name" value="P450"/>
</dbReference>
<dbReference type="SUPFAM" id="SSF48264">
    <property type="entry name" value="Cytochrome P450"/>
    <property type="match status" value="1"/>
</dbReference>
<dbReference type="PROSITE" id="PS00086">
    <property type="entry name" value="CYTOCHROME_P450"/>
    <property type="match status" value="1"/>
</dbReference>
<accession>P10634</accession>
<gene>
    <name type="primary">Cyp2d26</name>
    <name type="synonym">Cyp2d-26</name>
    <name type="synonym">Cyp2d2</name>
</gene>
<organism>
    <name type="scientific">Rattus norvegicus</name>
    <name type="common">Rat</name>
    <dbReference type="NCBI Taxonomy" id="10116"/>
    <lineage>
        <taxon>Eukaryota</taxon>
        <taxon>Metazoa</taxon>
        <taxon>Chordata</taxon>
        <taxon>Craniata</taxon>
        <taxon>Vertebrata</taxon>
        <taxon>Euteleostomi</taxon>
        <taxon>Mammalia</taxon>
        <taxon>Eutheria</taxon>
        <taxon>Euarchontoglires</taxon>
        <taxon>Glires</taxon>
        <taxon>Rodentia</taxon>
        <taxon>Myomorpha</taxon>
        <taxon>Muroidea</taxon>
        <taxon>Muridae</taxon>
        <taxon>Murinae</taxon>
        <taxon>Rattus</taxon>
    </lineage>
</organism>
<evidence type="ECO:0000250" key="1"/>
<evidence type="ECO:0000305" key="2"/>
<evidence type="ECO:0007744" key="3">
    <source>
    </source>
</evidence>
<comment type="function">
    <text>Cytochromes P450 are a group of heme-thiolate monooxygenases. In liver microsomes, this enzyme is involved in an NADPH-dependent electron transport pathway. It oxidizes a variety of structurally unrelated compounds, including steroids, fatty acids, and xenobiotics.</text>
</comment>
<comment type="catalytic activity">
    <reaction>
        <text>an organic molecule + reduced [NADPH--hemoprotein reductase] + O2 = an alcohol + oxidized [NADPH--hemoprotein reductase] + H2O + H(+)</text>
        <dbReference type="Rhea" id="RHEA:17149"/>
        <dbReference type="Rhea" id="RHEA-COMP:11964"/>
        <dbReference type="Rhea" id="RHEA-COMP:11965"/>
        <dbReference type="ChEBI" id="CHEBI:15377"/>
        <dbReference type="ChEBI" id="CHEBI:15378"/>
        <dbReference type="ChEBI" id="CHEBI:15379"/>
        <dbReference type="ChEBI" id="CHEBI:30879"/>
        <dbReference type="ChEBI" id="CHEBI:57618"/>
        <dbReference type="ChEBI" id="CHEBI:58210"/>
        <dbReference type="ChEBI" id="CHEBI:142491"/>
        <dbReference type="EC" id="1.14.14.1"/>
    </reaction>
</comment>
<comment type="cofactor">
    <cofactor evidence="1">
        <name>heme</name>
        <dbReference type="ChEBI" id="CHEBI:30413"/>
    </cofactor>
</comment>
<comment type="subcellular location">
    <subcellularLocation>
        <location>Endoplasmic reticulum membrane</location>
        <topology>Peripheral membrane protein</topology>
    </subcellularLocation>
    <subcellularLocation>
        <location>Microsome membrane</location>
        <topology>Peripheral membrane protein</topology>
    </subcellularLocation>
</comment>
<comment type="induction">
    <text>P450 can be induced to high levels in liver and other tissues by various foreign compounds, including drugs, pesticides, and carcinogens.</text>
</comment>
<comment type="similarity">
    <text evidence="2">Belongs to the cytochrome P450 family.</text>
</comment>
<sequence length="500" mass="56684">MGLLIGDDLWAVVIFTAIFLLLVDLVHRHKFWTAHYPPGPVPLPGLGNLLQVDFENMPYSLYKLRSRYGDVFSLQIAWKPVVVINGLKAVRELLVTYGEDTADRPLLPIYNHLGYGNKSKGVVLAPYGPEWREQRRFSVSTLRDFGVGKKSLEQWVTEEAGHLCDTFAKEAEHPFNPSILLSKAVSNVIASLVYARRFEYEDPFFNRMLKTLKESFGEDTGFMAEVLNAIPILLQIPGLPGKVFPKLNSFIALVDKMLIEHKKSWDPAQPPRDMTDAFLAEMQKAKGNPESSFNDENLRLVVIDLFMAGMVTTSTTLSWALLLMILHPDVQRRVHEEIDEVIGQVRRPEMADQARMPFTNAVIHEVQRFADIVPTNIPHMTSRDIKFQGFLIPKGTTLIPNLSSVLKDETVWEKPLRFHPEHFLDAQGNFVKHEAFMPFSAGRRACLGEPLARMELFLFFTCLLQRFSFSVLAGRPRPSTHGVYALPVTPQPYQLCAVAR</sequence>
<keyword id="KW-0256">Endoplasmic reticulum</keyword>
<keyword id="KW-0349">Heme</keyword>
<keyword id="KW-0408">Iron</keyword>
<keyword id="KW-0472">Membrane</keyword>
<keyword id="KW-0479">Metal-binding</keyword>
<keyword id="KW-0492">Microsome</keyword>
<keyword id="KW-0503">Monooxygenase</keyword>
<keyword id="KW-0560">Oxidoreductase</keyword>
<keyword id="KW-0597">Phosphoprotein</keyword>
<keyword id="KW-1185">Reference proteome</keyword>
<protein>
    <recommendedName>
        <fullName>Cytochrome P450 2D26</fullName>
        <ecNumber>1.14.14.1</ecNumber>
    </recommendedName>
    <alternativeName>
        <fullName>CYPIID26</fullName>
    </alternativeName>
    <alternativeName>
        <fullName>Cytochrome P450-CMF2</fullName>
    </alternativeName>
    <alternativeName>
        <fullName>Cytochrome P450-DB2</fullName>
    </alternativeName>
    <alternativeName>
        <fullName>Debrisoquine 4-hydroxylase</fullName>
    </alternativeName>
</protein>
<name>CP2DQ_RAT</name>
<proteinExistence type="evidence at protein level"/>
<feature type="chain" id="PRO_0000051747" description="Cytochrome P450 2D26">
    <location>
        <begin position="1"/>
        <end position="500"/>
    </location>
</feature>
<feature type="binding site" description="axial binding residue">
    <location>
        <position position="446"/>
    </location>
    <ligand>
        <name>heme</name>
        <dbReference type="ChEBI" id="CHEBI:30413"/>
    </ligand>
    <ligandPart>
        <name>Fe</name>
        <dbReference type="ChEBI" id="CHEBI:18248"/>
    </ligandPart>
</feature>
<feature type="modified residue" description="Phosphoserine" evidence="3">
    <location>
        <position position="249"/>
    </location>
</feature>
<feature type="sequence conflict" description="In Ref. 3; AAA41049." evidence="2" ref="3">
    <original>N</original>
    <variation>D</variation>
    <location>
        <position position="117"/>
    </location>
</feature>
<feature type="sequence conflict" description="In Ref. 1; AAA41055 and 2; no nucleotide entry." evidence="2" ref="1 2">
    <original>R</original>
    <variation>L</variation>
    <location>
        <position position="346"/>
    </location>
</feature>
<feature type="sequence conflict" description="In Ref. 1; AAA41055 and 2; no nucleotide entry." evidence="2" ref="1 2">
    <original>F</original>
    <variation>L</variation>
    <location>
        <position position="358"/>
    </location>
</feature>
<feature type="sequence conflict" description="In Ref. 1; AAA41055 and 2; no nucleotide entry." evidence="2" ref="1 2">
    <original>K</original>
    <variation>E</variation>
    <location>
        <position position="407"/>
    </location>
</feature>